<dbReference type="EMBL" id="AF215045">
    <property type="protein sequence ID" value="AAG60473.1"/>
    <property type="molecule type" value="mRNA"/>
</dbReference>
<dbReference type="SMR" id="Q9BP93"/>
<dbReference type="ConoServer" id="732">
    <property type="toxin name" value="Vn6.18 precursor"/>
</dbReference>
<dbReference type="GO" id="GO:0005576">
    <property type="term" value="C:extracellular region"/>
    <property type="evidence" value="ECO:0007669"/>
    <property type="project" value="UniProtKB-SubCell"/>
</dbReference>
<dbReference type="GO" id="GO:0008200">
    <property type="term" value="F:ion channel inhibitor activity"/>
    <property type="evidence" value="ECO:0007669"/>
    <property type="project" value="InterPro"/>
</dbReference>
<dbReference type="GO" id="GO:0090729">
    <property type="term" value="F:toxin activity"/>
    <property type="evidence" value="ECO:0007669"/>
    <property type="project" value="UniProtKB-KW"/>
</dbReference>
<dbReference type="InterPro" id="IPR004214">
    <property type="entry name" value="Conotoxin"/>
</dbReference>
<dbReference type="Pfam" id="PF02950">
    <property type="entry name" value="Conotoxin"/>
    <property type="match status" value="1"/>
</dbReference>
<organism>
    <name type="scientific">Conus ventricosus</name>
    <name type="common">Mediterranean cone</name>
    <dbReference type="NCBI Taxonomy" id="117992"/>
    <lineage>
        <taxon>Eukaryota</taxon>
        <taxon>Metazoa</taxon>
        <taxon>Spiralia</taxon>
        <taxon>Lophotrochozoa</taxon>
        <taxon>Mollusca</taxon>
        <taxon>Gastropoda</taxon>
        <taxon>Caenogastropoda</taxon>
        <taxon>Neogastropoda</taxon>
        <taxon>Conoidea</taxon>
        <taxon>Conidae</taxon>
        <taxon>Conus</taxon>
        <taxon>Lautoconus</taxon>
    </lineage>
</organism>
<comment type="subcellular location">
    <subcellularLocation>
        <location evidence="1">Secreted</location>
    </subcellularLocation>
</comment>
<comment type="tissue specificity">
    <text>Expressed by the venom duct.</text>
</comment>
<comment type="domain">
    <text evidence="1">The presence of a 'disulfide through disulfide knot' structurally defines this protein as a knottin.</text>
</comment>
<comment type="domain">
    <text>The cysteine framework is VI/VII (C-C-CC-C-C).</text>
</comment>
<comment type="similarity">
    <text evidence="4">Belongs to the conotoxin O1 superfamily.</text>
</comment>
<protein>
    <recommendedName>
        <fullName>Conotoxin VnMKLT2-013</fullName>
    </recommendedName>
</protein>
<keyword id="KW-1015">Disulfide bond</keyword>
<keyword id="KW-0960">Knottin</keyword>
<keyword id="KW-0528">Neurotoxin</keyword>
<keyword id="KW-0964">Secreted</keyword>
<keyword id="KW-0732">Signal</keyword>
<keyword id="KW-0800">Toxin</keyword>
<sequence length="76" mass="8101">MMKLTCVLIIAVLFLTACQLTTAETRDEYRAVRSSDEVQNSRSTDDCSTAGCKNVPCCEGLVCTGPSQGPVCQPLA</sequence>
<accession>Q9BP93</accession>
<name>O1618_CONVE</name>
<proteinExistence type="evidence at transcript level"/>
<reference key="1">
    <citation type="journal article" date="2001" name="Mol. Biol. Evol.">
        <title>Mechanisms for evolving hypervariability: the case of conopeptides.</title>
        <authorList>
            <person name="Conticello S.G."/>
            <person name="Gilad Y."/>
            <person name="Avidan N."/>
            <person name="Ben-Asher E."/>
            <person name="Levy Z."/>
            <person name="Fainzilber M."/>
        </authorList>
    </citation>
    <scope>NUCLEOTIDE SEQUENCE [MRNA]</scope>
    <source>
        <tissue>Venom duct</tissue>
    </source>
</reference>
<evidence type="ECO:0000250" key="1"/>
<evidence type="ECO:0000255" key="2"/>
<evidence type="ECO:0000256" key="3">
    <source>
        <dbReference type="SAM" id="MobiDB-lite"/>
    </source>
</evidence>
<evidence type="ECO:0000305" key="4"/>
<feature type="signal peptide" evidence="2">
    <location>
        <begin position="1"/>
        <end position="23"/>
    </location>
</feature>
<feature type="propeptide" id="PRO_0000404758" evidence="1">
    <location>
        <begin position="24"/>
        <end position="42"/>
    </location>
</feature>
<feature type="peptide" id="PRO_0000404759" description="Conotoxin VnMKLT2-013">
    <location>
        <begin position="43"/>
        <end position="76"/>
    </location>
</feature>
<feature type="region of interest" description="Disordered" evidence="3">
    <location>
        <begin position="29"/>
        <end position="49"/>
    </location>
</feature>
<feature type="disulfide bond" evidence="1">
    <location>
        <begin position="47"/>
        <end position="58"/>
    </location>
</feature>
<feature type="disulfide bond" evidence="1">
    <location>
        <begin position="52"/>
        <end position="63"/>
    </location>
</feature>
<feature type="disulfide bond" evidence="1">
    <location>
        <begin position="57"/>
        <end position="72"/>
    </location>
</feature>